<gene>
    <name evidence="1" type="primary">ruvA</name>
    <name type="ordered locus">Pfl01_4408</name>
</gene>
<evidence type="ECO:0000255" key="1">
    <source>
        <dbReference type="HAMAP-Rule" id="MF_00031"/>
    </source>
</evidence>
<reference key="1">
    <citation type="journal article" date="2009" name="Genome Biol.">
        <title>Genomic and genetic analyses of diversity and plant interactions of Pseudomonas fluorescens.</title>
        <authorList>
            <person name="Silby M.W."/>
            <person name="Cerdeno-Tarraga A.M."/>
            <person name="Vernikos G.S."/>
            <person name="Giddens S.R."/>
            <person name="Jackson R.W."/>
            <person name="Preston G.M."/>
            <person name="Zhang X.-X."/>
            <person name="Moon C.D."/>
            <person name="Gehrig S.M."/>
            <person name="Godfrey S.A.C."/>
            <person name="Knight C.G."/>
            <person name="Malone J.G."/>
            <person name="Robinson Z."/>
            <person name="Spiers A.J."/>
            <person name="Harris S."/>
            <person name="Challis G.L."/>
            <person name="Yaxley A.M."/>
            <person name="Harris D."/>
            <person name="Seeger K."/>
            <person name="Murphy L."/>
            <person name="Rutter S."/>
            <person name="Squares R."/>
            <person name="Quail M.A."/>
            <person name="Saunders E."/>
            <person name="Mavromatis K."/>
            <person name="Brettin T.S."/>
            <person name="Bentley S.D."/>
            <person name="Hothersall J."/>
            <person name="Stephens E."/>
            <person name="Thomas C.M."/>
            <person name="Parkhill J."/>
            <person name="Levy S.B."/>
            <person name="Rainey P.B."/>
            <person name="Thomson N.R."/>
        </authorList>
    </citation>
    <scope>NUCLEOTIDE SEQUENCE [LARGE SCALE GENOMIC DNA]</scope>
    <source>
        <strain>Pf0-1</strain>
    </source>
</reference>
<protein>
    <recommendedName>
        <fullName evidence="1">Holliday junction branch migration complex subunit RuvA</fullName>
    </recommendedName>
</protein>
<keyword id="KW-0963">Cytoplasm</keyword>
<keyword id="KW-0227">DNA damage</keyword>
<keyword id="KW-0233">DNA recombination</keyword>
<keyword id="KW-0234">DNA repair</keyword>
<keyword id="KW-0238">DNA-binding</keyword>
<sequence>MIGRLRGTLAEKQPPHLILDVNGLGYELEVPMTTLYRLPSVGEPLTLHTHLVVREDAQLLYGFAGKRERDFFRELIRLNGVGPKLALALMSSLEVDELIRCVQSQDTSALTKVPGVGKKTAERLLVELKNRFKAWETSPAMFALVPNQPDGPAPVNTAENDAVSALISLGYKPQEASKAISAIKEKGLSSEDMIRRALKGMI</sequence>
<feature type="chain" id="PRO_0000224895" description="Holliday junction branch migration complex subunit RuvA">
    <location>
        <begin position="1"/>
        <end position="202"/>
    </location>
</feature>
<feature type="region of interest" description="Domain I" evidence="1">
    <location>
        <begin position="1"/>
        <end position="64"/>
    </location>
</feature>
<feature type="region of interest" description="Domain II" evidence="1">
    <location>
        <begin position="65"/>
        <end position="143"/>
    </location>
</feature>
<feature type="region of interest" description="Flexible linker" evidence="1">
    <location>
        <begin position="144"/>
        <end position="154"/>
    </location>
</feature>
<feature type="region of interest" description="Domain III" evidence="1">
    <location>
        <begin position="154"/>
        <end position="202"/>
    </location>
</feature>
<organism>
    <name type="scientific">Pseudomonas fluorescens (strain Pf0-1)</name>
    <dbReference type="NCBI Taxonomy" id="205922"/>
    <lineage>
        <taxon>Bacteria</taxon>
        <taxon>Pseudomonadati</taxon>
        <taxon>Pseudomonadota</taxon>
        <taxon>Gammaproteobacteria</taxon>
        <taxon>Pseudomonadales</taxon>
        <taxon>Pseudomonadaceae</taxon>
        <taxon>Pseudomonas</taxon>
    </lineage>
</organism>
<name>RUVA_PSEPF</name>
<dbReference type="EMBL" id="CP000094">
    <property type="protein sequence ID" value="ABA76145.1"/>
    <property type="molecule type" value="Genomic_DNA"/>
</dbReference>
<dbReference type="RefSeq" id="WP_011335644.1">
    <property type="nucleotide sequence ID" value="NC_007492.2"/>
</dbReference>
<dbReference type="SMR" id="Q3K7V9"/>
<dbReference type="KEGG" id="pfo:Pfl01_4408"/>
<dbReference type="eggNOG" id="COG0632">
    <property type="taxonomic scope" value="Bacteria"/>
</dbReference>
<dbReference type="HOGENOM" id="CLU_087936_0_0_6"/>
<dbReference type="Proteomes" id="UP000002704">
    <property type="component" value="Chromosome"/>
</dbReference>
<dbReference type="GO" id="GO:0005737">
    <property type="term" value="C:cytoplasm"/>
    <property type="evidence" value="ECO:0007669"/>
    <property type="project" value="UniProtKB-SubCell"/>
</dbReference>
<dbReference type="GO" id="GO:0009379">
    <property type="term" value="C:Holliday junction helicase complex"/>
    <property type="evidence" value="ECO:0007669"/>
    <property type="project" value="InterPro"/>
</dbReference>
<dbReference type="GO" id="GO:0048476">
    <property type="term" value="C:Holliday junction resolvase complex"/>
    <property type="evidence" value="ECO:0007669"/>
    <property type="project" value="UniProtKB-UniRule"/>
</dbReference>
<dbReference type="GO" id="GO:0005524">
    <property type="term" value="F:ATP binding"/>
    <property type="evidence" value="ECO:0007669"/>
    <property type="project" value="InterPro"/>
</dbReference>
<dbReference type="GO" id="GO:0000400">
    <property type="term" value="F:four-way junction DNA binding"/>
    <property type="evidence" value="ECO:0007669"/>
    <property type="project" value="UniProtKB-UniRule"/>
</dbReference>
<dbReference type="GO" id="GO:0009378">
    <property type="term" value="F:four-way junction helicase activity"/>
    <property type="evidence" value="ECO:0007669"/>
    <property type="project" value="InterPro"/>
</dbReference>
<dbReference type="GO" id="GO:0006310">
    <property type="term" value="P:DNA recombination"/>
    <property type="evidence" value="ECO:0007669"/>
    <property type="project" value="UniProtKB-UniRule"/>
</dbReference>
<dbReference type="GO" id="GO:0006281">
    <property type="term" value="P:DNA repair"/>
    <property type="evidence" value="ECO:0007669"/>
    <property type="project" value="UniProtKB-UniRule"/>
</dbReference>
<dbReference type="CDD" id="cd14332">
    <property type="entry name" value="UBA_RuvA_C"/>
    <property type="match status" value="1"/>
</dbReference>
<dbReference type="Gene3D" id="1.10.150.20">
    <property type="entry name" value="5' to 3' exonuclease, C-terminal subdomain"/>
    <property type="match status" value="1"/>
</dbReference>
<dbReference type="Gene3D" id="1.10.8.10">
    <property type="entry name" value="DNA helicase RuvA subunit, C-terminal domain"/>
    <property type="match status" value="1"/>
</dbReference>
<dbReference type="Gene3D" id="2.40.50.140">
    <property type="entry name" value="Nucleic acid-binding proteins"/>
    <property type="match status" value="1"/>
</dbReference>
<dbReference type="HAMAP" id="MF_00031">
    <property type="entry name" value="DNA_HJ_migration_RuvA"/>
    <property type="match status" value="1"/>
</dbReference>
<dbReference type="InterPro" id="IPR013849">
    <property type="entry name" value="DNA_helicase_Holl-junc_RuvA_I"/>
</dbReference>
<dbReference type="InterPro" id="IPR003583">
    <property type="entry name" value="Hlx-hairpin-Hlx_DNA-bd_motif"/>
</dbReference>
<dbReference type="InterPro" id="IPR012340">
    <property type="entry name" value="NA-bd_OB-fold"/>
</dbReference>
<dbReference type="InterPro" id="IPR000085">
    <property type="entry name" value="RuvA"/>
</dbReference>
<dbReference type="InterPro" id="IPR010994">
    <property type="entry name" value="RuvA_2-like"/>
</dbReference>
<dbReference type="InterPro" id="IPR011114">
    <property type="entry name" value="RuvA_C"/>
</dbReference>
<dbReference type="InterPro" id="IPR036267">
    <property type="entry name" value="RuvA_C_sf"/>
</dbReference>
<dbReference type="NCBIfam" id="TIGR00084">
    <property type="entry name" value="ruvA"/>
    <property type="match status" value="1"/>
</dbReference>
<dbReference type="Pfam" id="PF14520">
    <property type="entry name" value="HHH_5"/>
    <property type="match status" value="1"/>
</dbReference>
<dbReference type="Pfam" id="PF07499">
    <property type="entry name" value="RuvA_C"/>
    <property type="match status" value="1"/>
</dbReference>
<dbReference type="Pfam" id="PF01330">
    <property type="entry name" value="RuvA_N"/>
    <property type="match status" value="1"/>
</dbReference>
<dbReference type="SMART" id="SM00278">
    <property type="entry name" value="HhH1"/>
    <property type="match status" value="2"/>
</dbReference>
<dbReference type="SUPFAM" id="SSF46929">
    <property type="entry name" value="DNA helicase RuvA subunit, C-terminal domain"/>
    <property type="match status" value="1"/>
</dbReference>
<dbReference type="SUPFAM" id="SSF50249">
    <property type="entry name" value="Nucleic acid-binding proteins"/>
    <property type="match status" value="1"/>
</dbReference>
<dbReference type="SUPFAM" id="SSF47781">
    <property type="entry name" value="RuvA domain 2-like"/>
    <property type="match status" value="1"/>
</dbReference>
<comment type="function">
    <text evidence="1">The RuvA-RuvB-RuvC complex processes Holliday junction (HJ) DNA during genetic recombination and DNA repair, while the RuvA-RuvB complex plays an important role in the rescue of blocked DNA replication forks via replication fork reversal (RFR). RuvA specifically binds to HJ cruciform DNA, conferring on it an open structure. The RuvB hexamer acts as an ATP-dependent pump, pulling dsDNA into and through the RuvAB complex. HJ branch migration allows RuvC to scan DNA until it finds its consensus sequence, where it cleaves and resolves the cruciform DNA.</text>
</comment>
<comment type="subunit">
    <text evidence="1">Homotetramer. Forms an RuvA(8)-RuvB(12)-Holliday junction (HJ) complex. HJ DNA is sandwiched between 2 RuvA tetramers; dsDNA enters through RuvA and exits via RuvB. An RuvB hexamer assembles on each DNA strand where it exits the tetramer. Each RuvB hexamer is contacted by two RuvA subunits (via domain III) on 2 adjacent RuvB subunits; this complex drives branch migration. In the full resolvosome a probable DNA-RuvA(4)-RuvB(12)-RuvC(2) complex forms which resolves the HJ.</text>
</comment>
<comment type="subcellular location">
    <subcellularLocation>
        <location evidence="1">Cytoplasm</location>
    </subcellularLocation>
</comment>
<comment type="domain">
    <text evidence="1">Has three domains with a flexible linker between the domains II and III and assumes an 'L' shape. Domain III is highly mobile and contacts RuvB.</text>
</comment>
<comment type="similarity">
    <text evidence="1">Belongs to the RuvA family.</text>
</comment>
<proteinExistence type="inferred from homology"/>
<accession>Q3K7V9</accession>